<dbReference type="EMBL" id="CP000868">
    <property type="protein sequence ID" value="ABX13971.1"/>
    <property type="molecule type" value="Genomic_DNA"/>
</dbReference>
<dbReference type="EMBL" id="AP009385">
    <property type="protein sequence ID" value="BAG44863.1"/>
    <property type="molecule type" value="Genomic_DNA"/>
</dbReference>
<dbReference type="RefSeq" id="WP_006400638.1">
    <property type="nucleotide sequence ID" value="NC_010804.1"/>
</dbReference>
<dbReference type="SMR" id="A9ADM0"/>
<dbReference type="STRING" id="395019.BMULJ_02978"/>
<dbReference type="GeneID" id="93170990"/>
<dbReference type="KEGG" id="bmj:BMULJ_02978"/>
<dbReference type="KEGG" id="bmu:Bmul_0276"/>
<dbReference type="eggNOG" id="COG0203">
    <property type="taxonomic scope" value="Bacteria"/>
</dbReference>
<dbReference type="HOGENOM" id="CLU_074407_2_0_4"/>
<dbReference type="Proteomes" id="UP000008815">
    <property type="component" value="Chromosome 1"/>
</dbReference>
<dbReference type="GO" id="GO:0022625">
    <property type="term" value="C:cytosolic large ribosomal subunit"/>
    <property type="evidence" value="ECO:0007669"/>
    <property type="project" value="TreeGrafter"/>
</dbReference>
<dbReference type="GO" id="GO:0003735">
    <property type="term" value="F:structural constituent of ribosome"/>
    <property type="evidence" value="ECO:0007669"/>
    <property type="project" value="InterPro"/>
</dbReference>
<dbReference type="GO" id="GO:0006412">
    <property type="term" value="P:translation"/>
    <property type="evidence" value="ECO:0007669"/>
    <property type="project" value="UniProtKB-UniRule"/>
</dbReference>
<dbReference type="FunFam" id="3.90.1030.10:FF:000001">
    <property type="entry name" value="50S ribosomal protein L17"/>
    <property type="match status" value="1"/>
</dbReference>
<dbReference type="Gene3D" id="3.90.1030.10">
    <property type="entry name" value="Ribosomal protein L17"/>
    <property type="match status" value="1"/>
</dbReference>
<dbReference type="HAMAP" id="MF_01368">
    <property type="entry name" value="Ribosomal_bL17"/>
    <property type="match status" value="1"/>
</dbReference>
<dbReference type="InterPro" id="IPR000456">
    <property type="entry name" value="Ribosomal_bL17"/>
</dbReference>
<dbReference type="InterPro" id="IPR047859">
    <property type="entry name" value="Ribosomal_bL17_CS"/>
</dbReference>
<dbReference type="InterPro" id="IPR036373">
    <property type="entry name" value="Ribosomal_bL17_sf"/>
</dbReference>
<dbReference type="NCBIfam" id="TIGR00059">
    <property type="entry name" value="L17"/>
    <property type="match status" value="1"/>
</dbReference>
<dbReference type="PANTHER" id="PTHR14413:SF16">
    <property type="entry name" value="LARGE RIBOSOMAL SUBUNIT PROTEIN BL17M"/>
    <property type="match status" value="1"/>
</dbReference>
<dbReference type="PANTHER" id="PTHR14413">
    <property type="entry name" value="RIBOSOMAL PROTEIN L17"/>
    <property type="match status" value="1"/>
</dbReference>
<dbReference type="Pfam" id="PF01196">
    <property type="entry name" value="Ribosomal_L17"/>
    <property type="match status" value="1"/>
</dbReference>
<dbReference type="SUPFAM" id="SSF64263">
    <property type="entry name" value="Prokaryotic ribosomal protein L17"/>
    <property type="match status" value="1"/>
</dbReference>
<dbReference type="PROSITE" id="PS01167">
    <property type="entry name" value="RIBOSOMAL_L17"/>
    <property type="match status" value="1"/>
</dbReference>
<name>RL17_BURM1</name>
<proteinExistence type="inferred from homology"/>
<gene>
    <name evidence="1" type="primary">rplQ</name>
    <name type="ordered locus">Bmul_0276</name>
    <name type="ordered locus">BMULJ_02978</name>
</gene>
<organism>
    <name type="scientific">Burkholderia multivorans (strain ATCC 17616 / 249)</name>
    <dbReference type="NCBI Taxonomy" id="395019"/>
    <lineage>
        <taxon>Bacteria</taxon>
        <taxon>Pseudomonadati</taxon>
        <taxon>Pseudomonadota</taxon>
        <taxon>Betaproteobacteria</taxon>
        <taxon>Burkholderiales</taxon>
        <taxon>Burkholderiaceae</taxon>
        <taxon>Burkholderia</taxon>
        <taxon>Burkholderia cepacia complex</taxon>
    </lineage>
</organism>
<keyword id="KW-1185">Reference proteome</keyword>
<keyword id="KW-0687">Ribonucleoprotein</keyword>
<keyword id="KW-0689">Ribosomal protein</keyword>
<evidence type="ECO:0000255" key="1">
    <source>
        <dbReference type="HAMAP-Rule" id="MF_01368"/>
    </source>
</evidence>
<evidence type="ECO:0000305" key="2"/>
<feature type="chain" id="PRO_1000144390" description="Large ribosomal subunit protein bL17">
    <location>
        <begin position="1"/>
        <end position="131"/>
    </location>
</feature>
<reference key="1">
    <citation type="submission" date="2007-10" db="EMBL/GenBank/DDBJ databases">
        <title>Complete sequence of chromosome 1 of Burkholderia multivorans ATCC 17616.</title>
        <authorList>
            <person name="Copeland A."/>
            <person name="Lucas S."/>
            <person name="Lapidus A."/>
            <person name="Barry K."/>
            <person name="Glavina del Rio T."/>
            <person name="Dalin E."/>
            <person name="Tice H."/>
            <person name="Pitluck S."/>
            <person name="Chain P."/>
            <person name="Malfatti S."/>
            <person name="Shin M."/>
            <person name="Vergez L."/>
            <person name="Schmutz J."/>
            <person name="Larimer F."/>
            <person name="Land M."/>
            <person name="Hauser L."/>
            <person name="Kyrpides N."/>
            <person name="Kim E."/>
            <person name="Tiedje J."/>
            <person name="Richardson P."/>
        </authorList>
    </citation>
    <scope>NUCLEOTIDE SEQUENCE [LARGE SCALE GENOMIC DNA]</scope>
    <source>
        <strain>ATCC 17616 / 249</strain>
    </source>
</reference>
<reference key="2">
    <citation type="submission" date="2007-04" db="EMBL/GenBank/DDBJ databases">
        <title>Complete genome sequence of Burkholderia multivorans ATCC 17616.</title>
        <authorList>
            <person name="Ohtsubo Y."/>
            <person name="Yamashita A."/>
            <person name="Kurokawa K."/>
            <person name="Takami H."/>
            <person name="Yuhara S."/>
            <person name="Nishiyama E."/>
            <person name="Endo R."/>
            <person name="Miyazaki R."/>
            <person name="Ono A."/>
            <person name="Yano K."/>
            <person name="Ito M."/>
            <person name="Sota M."/>
            <person name="Yuji N."/>
            <person name="Hattori M."/>
            <person name="Tsuda M."/>
        </authorList>
    </citation>
    <scope>NUCLEOTIDE SEQUENCE [LARGE SCALE GENOMIC DNA]</scope>
    <source>
        <strain>ATCC 17616 / 249</strain>
    </source>
</reference>
<accession>A9ADM0</accession>
<sequence>MRHRHGLRKLNRTSSHRLAMLRNMSNSLIEHEVIKTTLPKAKELRKVVEPLITLGKKPSLANRRLAFNRLRDRDSVAKLFDVLGPRFANRPGGYLRILKFGFRVGDNAPMALVELLDRPEVDETENVQEAE</sequence>
<protein>
    <recommendedName>
        <fullName evidence="1">Large ribosomal subunit protein bL17</fullName>
    </recommendedName>
    <alternativeName>
        <fullName evidence="2">50S ribosomal protein L17</fullName>
    </alternativeName>
</protein>
<comment type="subunit">
    <text evidence="1">Part of the 50S ribosomal subunit. Contacts protein L32.</text>
</comment>
<comment type="similarity">
    <text evidence="1">Belongs to the bacterial ribosomal protein bL17 family.</text>
</comment>